<proteinExistence type="inferred from homology"/>
<accession>Q9UST4</accession>
<gene>
    <name type="primary">tif51b</name>
    <name type="ORF">SPBC336.10c</name>
</gene>
<sequence length="169" mass="18563">MGMFIQKEHKPTMAEEEHVDFEGGEAGASLTFPMQCSALRKNGHVVIKGRPCKIVDMSTSKTGKHGHAKVHIVALDIFNGRKYEDMSPSTHNMDVPVVKRDEYQLVNIDDGYLNLMTTDGTTKDDVRLPEGELGNEIEEGFEEGKDLIITVVSAMGEEIALACRDAPSA</sequence>
<protein>
    <recommendedName>
        <fullName>Eukaryotic translation initiation factor 5A-2</fullName>
        <shortName>eIF-5A-2</shortName>
    </recommendedName>
</protein>
<dbReference type="EMBL" id="CU329671">
    <property type="protein sequence ID" value="CAB58162.2"/>
    <property type="molecule type" value="Genomic_DNA"/>
</dbReference>
<dbReference type="PIR" id="T40248">
    <property type="entry name" value="T40248"/>
</dbReference>
<dbReference type="RefSeq" id="NP_596130.2">
    <property type="nucleotide sequence ID" value="NM_001022048.2"/>
</dbReference>
<dbReference type="SMR" id="Q9UST4"/>
<dbReference type="BioGRID" id="276764">
    <property type="interactions" value="25"/>
</dbReference>
<dbReference type="FunCoup" id="Q9UST4">
    <property type="interactions" value="430"/>
</dbReference>
<dbReference type="STRING" id="284812.Q9UST4"/>
<dbReference type="iPTMnet" id="Q9UST4"/>
<dbReference type="PaxDb" id="4896-SPBC336.10c.1"/>
<dbReference type="EnsemblFungi" id="SPBC336.10c.1">
    <property type="protein sequence ID" value="SPBC336.10c.1:pep"/>
    <property type="gene ID" value="SPBC336.10c"/>
</dbReference>
<dbReference type="KEGG" id="spo:2540232"/>
<dbReference type="PomBase" id="SPBC336.10c"/>
<dbReference type="VEuPathDB" id="FungiDB:SPBC336.10c"/>
<dbReference type="eggNOG" id="KOG3271">
    <property type="taxonomic scope" value="Eukaryota"/>
</dbReference>
<dbReference type="HOGENOM" id="CLU_102600_1_0_1"/>
<dbReference type="InParanoid" id="Q9UST4"/>
<dbReference type="OMA" id="KDDVRMP"/>
<dbReference type="Reactome" id="R-SPO-204626">
    <property type="pathway name" value="Hypusine synthesis from eIF5A-lysine"/>
</dbReference>
<dbReference type="PRO" id="PR:Q9UST4"/>
<dbReference type="Proteomes" id="UP000002485">
    <property type="component" value="Chromosome II"/>
</dbReference>
<dbReference type="GO" id="GO:0005829">
    <property type="term" value="C:cytosol"/>
    <property type="evidence" value="ECO:0007005"/>
    <property type="project" value="PomBase"/>
</dbReference>
<dbReference type="GO" id="GO:0005634">
    <property type="term" value="C:nucleus"/>
    <property type="evidence" value="ECO:0007005"/>
    <property type="project" value="PomBase"/>
</dbReference>
<dbReference type="GO" id="GO:0032991">
    <property type="term" value="C:protein-containing complex"/>
    <property type="evidence" value="ECO:0007669"/>
    <property type="project" value="UniProtKB-ARBA"/>
</dbReference>
<dbReference type="GO" id="GO:0043022">
    <property type="term" value="F:ribosome binding"/>
    <property type="evidence" value="ECO:0000266"/>
    <property type="project" value="PomBase"/>
</dbReference>
<dbReference type="GO" id="GO:0003723">
    <property type="term" value="F:RNA binding"/>
    <property type="evidence" value="ECO:0000266"/>
    <property type="project" value="PomBase"/>
</dbReference>
<dbReference type="GO" id="GO:0003746">
    <property type="term" value="F:translation elongation factor activity"/>
    <property type="evidence" value="ECO:0000318"/>
    <property type="project" value="GO_Central"/>
</dbReference>
<dbReference type="GO" id="GO:0008079">
    <property type="term" value="F:translation termination factor activity"/>
    <property type="evidence" value="ECO:0000266"/>
    <property type="project" value="PomBase"/>
</dbReference>
<dbReference type="GO" id="GO:0002182">
    <property type="term" value="P:cytoplasmic translational elongation"/>
    <property type="evidence" value="ECO:0000266"/>
    <property type="project" value="PomBase"/>
</dbReference>
<dbReference type="GO" id="GO:0002184">
    <property type="term" value="P:cytoplasmic translational termination"/>
    <property type="evidence" value="ECO:0000266"/>
    <property type="project" value="PomBase"/>
</dbReference>
<dbReference type="GO" id="GO:0045901">
    <property type="term" value="P:positive regulation of translational elongation"/>
    <property type="evidence" value="ECO:0007669"/>
    <property type="project" value="InterPro"/>
</dbReference>
<dbReference type="GO" id="GO:0045905">
    <property type="term" value="P:positive regulation of translational termination"/>
    <property type="evidence" value="ECO:0007669"/>
    <property type="project" value="InterPro"/>
</dbReference>
<dbReference type="GO" id="GO:0006414">
    <property type="term" value="P:translational elongation"/>
    <property type="evidence" value="ECO:0000318"/>
    <property type="project" value="GO_Central"/>
</dbReference>
<dbReference type="CDD" id="cd04468">
    <property type="entry name" value="S1_eIF5A"/>
    <property type="match status" value="1"/>
</dbReference>
<dbReference type="FunFam" id="2.30.30.30:FF:000007">
    <property type="entry name" value="Eukaryotic translation initiation factor 5A"/>
    <property type="match status" value="1"/>
</dbReference>
<dbReference type="FunFam" id="2.40.50.140:FF:000034">
    <property type="entry name" value="Eukaryotic translation initiation factor 5A"/>
    <property type="match status" value="1"/>
</dbReference>
<dbReference type="Gene3D" id="2.30.30.30">
    <property type="match status" value="1"/>
</dbReference>
<dbReference type="Gene3D" id="2.40.50.140">
    <property type="entry name" value="Nucleic acid-binding proteins"/>
    <property type="match status" value="1"/>
</dbReference>
<dbReference type="InterPro" id="IPR001884">
    <property type="entry name" value="IF5A-like"/>
</dbReference>
<dbReference type="InterPro" id="IPR048670">
    <property type="entry name" value="IF5A-like_N"/>
</dbReference>
<dbReference type="InterPro" id="IPR012340">
    <property type="entry name" value="NA-bd_OB-fold"/>
</dbReference>
<dbReference type="InterPro" id="IPR014722">
    <property type="entry name" value="Rib_uL2_dom2"/>
</dbReference>
<dbReference type="InterPro" id="IPR019769">
    <property type="entry name" value="Trans_elong_IF5A_hypusine_site"/>
</dbReference>
<dbReference type="InterPro" id="IPR020189">
    <property type="entry name" value="Transl_elong_IF5A_C"/>
</dbReference>
<dbReference type="InterPro" id="IPR008991">
    <property type="entry name" value="Translation_prot_SH3-like_sf"/>
</dbReference>
<dbReference type="NCBIfam" id="TIGR00037">
    <property type="entry name" value="eIF_5A"/>
    <property type="match status" value="1"/>
</dbReference>
<dbReference type="PANTHER" id="PTHR11673">
    <property type="entry name" value="TRANSLATION INITIATION FACTOR 5A FAMILY MEMBER"/>
    <property type="match status" value="1"/>
</dbReference>
<dbReference type="Pfam" id="PF01287">
    <property type="entry name" value="eIF-5a"/>
    <property type="match status" value="1"/>
</dbReference>
<dbReference type="Pfam" id="PF21485">
    <property type="entry name" value="IF5A-like_N"/>
    <property type="match status" value="1"/>
</dbReference>
<dbReference type="PIRSF" id="PIRSF003025">
    <property type="entry name" value="eIF5A"/>
    <property type="match status" value="1"/>
</dbReference>
<dbReference type="SMART" id="SM01376">
    <property type="entry name" value="eIF-5a"/>
    <property type="match status" value="1"/>
</dbReference>
<dbReference type="SUPFAM" id="SSF50249">
    <property type="entry name" value="Nucleic acid-binding proteins"/>
    <property type="match status" value="1"/>
</dbReference>
<dbReference type="SUPFAM" id="SSF50104">
    <property type="entry name" value="Translation proteins SH3-like domain"/>
    <property type="match status" value="1"/>
</dbReference>
<dbReference type="PROSITE" id="PS00302">
    <property type="entry name" value="IF5A_HYPUSINE"/>
    <property type="match status" value="1"/>
</dbReference>
<evidence type="ECO:0000250" key="1">
    <source>
        <dbReference type="UniProtKB" id="P19211"/>
    </source>
</evidence>
<evidence type="ECO:0000250" key="2">
    <source>
        <dbReference type="UniProtKB" id="P23301"/>
    </source>
</evidence>
<evidence type="ECO:0000269" key="3">
    <source>
    </source>
</evidence>
<evidence type="ECO:0000305" key="4"/>
<reference key="1">
    <citation type="journal article" date="2002" name="Nature">
        <title>The genome sequence of Schizosaccharomyces pombe.</title>
        <authorList>
            <person name="Wood V."/>
            <person name="Gwilliam R."/>
            <person name="Rajandream M.A."/>
            <person name="Lyne M.H."/>
            <person name="Lyne R."/>
            <person name="Stewart A."/>
            <person name="Sgouros J.G."/>
            <person name="Peat N."/>
            <person name="Hayles J."/>
            <person name="Baker S.G."/>
            <person name="Basham D."/>
            <person name="Bowman S."/>
            <person name="Brooks K."/>
            <person name="Brown D."/>
            <person name="Brown S."/>
            <person name="Chillingworth T."/>
            <person name="Churcher C.M."/>
            <person name="Collins M."/>
            <person name="Connor R."/>
            <person name="Cronin A."/>
            <person name="Davis P."/>
            <person name="Feltwell T."/>
            <person name="Fraser A."/>
            <person name="Gentles S."/>
            <person name="Goble A."/>
            <person name="Hamlin N."/>
            <person name="Harris D.E."/>
            <person name="Hidalgo J."/>
            <person name="Hodgson G."/>
            <person name="Holroyd S."/>
            <person name="Hornsby T."/>
            <person name="Howarth S."/>
            <person name="Huckle E.J."/>
            <person name="Hunt S."/>
            <person name="Jagels K."/>
            <person name="James K.D."/>
            <person name="Jones L."/>
            <person name="Jones M."/>
            <person name="Leather S."/>
            <person name="McDonald S."/>
            <person name="McLean J."/>
            <person name="Mooney P."/>
            <person name="Moule S."/>
            <person name="Mungall K.L."/>
            <person name="Murphy L.D."/>
            <person name="Niblett D."/>
            <person name="Odell C."/>
            <person name="Oliver K."/>
            <person name="O'Neil S."/>
            <person name="Pearson D."/>
            <person name="Quail M.A."/>
            <person name="Rabbinowitsch E."/>
            <person name="Rutherford K.M."/>
            <person name="Rutter S."/>
            <person name="Saunders D."/>
            <person name="Seeger K."/>
            <person name="Sharp S."/>
            <person name="Skelton J."/>
            <person name="Simmonds M.N."/>
            <person name="Squares R."/>
            <person name="Squares S."/>
            <person name="Stevens K."/>
            <person name="Taylor K."/>
            <person name="Taylor R.G."/>
            <person name="Tivey A."/>
            <person name="Walsh S.V."/>
            <person name="Warren T."/>
            <person name="Whitehead S."/>
            <person name="Woodward J.R."/>
            <person name="Volckaert G."/>
            <person name="Aert R."/>
            <person name="Robben J."/>
            <person name="Grymonprez B."/>
            <person name="Weltjens I."/>
            <person name="Vanstreels E."/>
            <person name="Rieger M."/>
            <person name="Schaefer M."/>
            <person name="Mueller-Auer S."/>
            <person name="Gabel C."/>
            <person name="Fuchs M."/>
            <person name="Duesterhoeft A."/>
            <person name="Fritzc C."/>
            <person name="Holzer E."/>
            <person name="Moestl D."/>
            <person name="Hilbert H."/>
            <person name="Borzym K."/>
            <person name="Langer I."/>
            <person name="Beck A."/>
            <person name="Lehrach H."/>
            <person name="Reinhardt R."/>
            <person name="Pohl T.M."/>
            <person name="Eger P."/>
            <person name="Zimmermann W."/>
            <person name="Wedler H."/>
            <person name="Wambutt R."/>
            <person name="Purnelle B."/>
            <person name="Goffeau A."/>
            <person name="Cadieu E."/>
            <person name="Dreano S."/>
            <person name="Gloux S."/>
            <person name="Lelaure V."/>
            <person name="Mottier S."/>
            <person name="Galibert F."/>
            <person name="Aves S.J."/>
            <person name="Xiang Z."/>
            <person name="Hunt C."/>
            <person name="Moore K."/>
            <person name="Hurst S.M."/>
            <person name="Lucas M."/>
            <person name="Rochet M."/>
            <person name="Gaillardin C."/>
            <person name="Tallada V.A."/>
            <person name="Garzon A."/>
            <person name="Thode G."/>
            <person name="Daga R.R."/>
            <person name="Cruzado L."/>
            <person name="Jimenez J."/>
            <person name="Sanchez M."/>
            <person name="del Rey F."/>
            <person name="Benito J."/>
            <person name="Dominguez A."/>
            <person name="Revuelta J.L."/>
            <person name="Moreno S."/>
            <person name="Armstrong J."/>
            <person name="Forsburg S.L."/>
            <person name="Cerutti L."/>
            <person name="Lowe T."/>
            <person name="McCombie W.R."/>
            <person name="Paulsen I."/>
            <person name="Potashkin J."/>
            <person name="Shpakovski G.V."/>
            <person name="Ussery D."/>
            <person name="Barrell B.G."/>
            <person name="Nurse P."/>
        </authorList>
    </citation>
    <scope>NUCLEOTIDE SEQUENCE [LARGE SCALE GENOMIC DNA]</scope>
    <source>
        <strain>972 / ATCC 24843</strain>
    </source>
</reference>
<reference key="2">
    <citation type="journal article" date="2011" name="Science">
        <title>Comparative functional genomics of the fission yeasts.</title>
        <authorList>
            <person name="Rhind N."/>
            <person name="Chen Z."/>
            <person name="Yassour M."/>
            <person name="Thompson D.A."/>
            <person name="Haas B.J."/>
            <person name="Habib N."/>
            <person name="Wapinski I."/>
            <person name="Roy S."/>
            <person name="Lin M.F."/>
            <person name="Heiman D.I."/>
            <person name="Young S.K."/>
            <person name="Furuya K."/>
            <person name="Guo Y."/>
            <person name="Pidoux A."/>
            <person name="Chen H.M."/>
            <person name="Robbertse B."/>
            <person name="Goldberg J.M."/>
            <person name="Aoki K."/>
            <person name="Bayne E.H."/>
            <person name="Berlin A.M."/>
            <person name="Desjardins C.A."/>
            <person name="Dobbs E."/>
            <person name="Dukaj L."/>
            <person name="Fan L."/>
            <person name="FitzGerald M.G."/>
            <person name="French C."/>
            <person name="Gujja S."/>
            <person name="Hansen K."/>
            <person name="Keifenheim D."/>
            <person name="Levin J.Z."/>
            <person name="Mosher R.A."/>
            <person name="Mueller C.A."/>
            <person name="Pfiffner J."/>
            <person name="Priest M."/>
            <person name="Russ C."/>
            <person name="Smialowska A."/>
            <person name="Swoboda P."/>
            <person name="Sykes S.M."/>
            <person name="Vaughn M."/>
            <person name="Vengrova S."/>
            <person name="Yoder R."/>
            <person name="Zeng Q."/>
            <person name="Allshire R."/>
            <person name="Baulcombe D."/>
            <person name="Birren B.W."/>
            <person name="Brown W."/>
            <person name="Ekwall K."/>
            <person name="Kellis M."/>
            <person name="Leatherwood J."/>
            <person name="Levin H."/>
            <person name="Margalit H."/>
            <person name="Martienssen R."/>
            <person name="Nieduszynski C.A."/>
            <person name="Spatafora J.W."/>
            <person name="Friedman N."/>
            <person name="Dalgaard J.Z."/>
            <person name="Baumann P."/>
            <person name="Niki H."/>
            <person name="Regev A."/>
            <person name="Nusbaum C."/>
        </authorList>
    </citation>
    <scope>REVISION OF GENE MODEL</scope>
</reference>
<reference key="3">
    <citation type="journal article" date="2006" name="Nat. Biotechnol.">
        <title>ORFeome cloning and global analysis of protein localization in the fission yeast Schizosaccharomyces pombe.</title>
        <authorList>
            <person name="Matsuyama A."/>
            <person name="Arai R."/>
            <person name="Yashiroda Y."/>
            <person name="Shirai A."/>
            <person name="Kamata A."/>
            <person name="Sekido S."/>
            <person name="Kobayashi Y."/>
            <person name="Hashimoto A."/>
            <person name="Hamamoto M."/>
            <person name="Hiraoka Y."/>
            <person name="Horinouchi S."/>
            <person name="Yoshida M."/>
        </authorList>
    </citation>
    <scope>SUBCELLULAR LOCATION [LARGE SCALE ANALYSIS]</scope>
</reference>
<organism>
    <name type="scientific">Schizosaccharomyces pombe (strain 972 / ATCC 24843)</name>
    <name type="common">Fission yeast</name>
    <dbReference type="NCBI Taxonomy" id="284812"/>
    <lineage>
        <taxon>Eukaryota</taxon>
        <taxon>Fungi</taxon>
        <taxon>Dikarya</taxon>
        <taxon>Ascomycota</taxon>
        <taxon>Taphrinomycotina</taxon>
        <taxon>Schizosaccharomycetes</taxon>
        <taxon>Schizosaccharomycetales</taxon>
        <taxon>Schizosaccharomycetaceae</taxon>
        <taxon>Schizosaccharomyces</taxon>
    </lineage>
</organism>
<name>IF5A2_SCHPO</name>
<keyword id="KW-0963">Cytoplasm</keyword>
<keyword id="KW-0251">Elongation factor</keyword>
<keyword id="KW-0385">Hypusine</keyword>
<keyword id="KW-0539">Nucleus</keyword>
<keyword id="KW-0648">Protein biosynthesis</keyword>
<keyword id="KW-1185">Reference proteome</keyword>
<keyword id="KW-0694">RNA-binding</keyword>
<feature type="chain" id="PRO_0000142486" description="Eukaryotic translation initiation factor 5A-2">
    <location>
        <begin position="1"/>
        <end position="169"/>
    </location>
</feature>
<feature type="modified residue" description="Hypusine" evidence="1">
    <location>
        <position position="64"/>
    </location>
</feature>
<comment type="function">
    <text evidence="2">Translation factor that promotes translation elongation and termination, particularly upon ribosome stalling at specific amino acid sequence contexts. Binds between the exit (E) and peptidyl (P) site of the ribosome and promotes rescue of stalled ribosome: specifically required for efficient translation of polyproline-containing peptides as well as other motifs that stall the ribosome. Acts as a ribosome quality control (RQC) cofactor by joining the RQC complex to facilitate peptidyl transfer during CAT tailing step.</text>
</comment>
<comment type="subcellular location">
    <subcellularLocation>
        <location evidence="3">Cytoplasm</location>
    </subcellularLocation>
    <subcellularLocation>
        <location evidence="3">Nucleus</location>
    </subcellularLocation>
</comment>
<comment type="PTM">
    <text evidence="1">Lys-51 undergoes hypusination, a unique post-translational modification that consists in the addition of a butylamino group from spermidine to lysine side chain, leading to the formation of the unusual amino acid hypusine. eIF-5As are the only known proteins to undergo this modification, which is essential for their function.</text>
</comment>
<comment type="miscellaneous">
    <text>There are two genes for eIF-5A in S.pombe.</text>
</comment>
<comment type="similarity">
    <text evidence="4">Belongs to the eIF-5A family.</text>
</comment>